<proteinExistence type="predicted"/>
<accession>Q65359</accession>
<accession>O12550</accession>
<accession>O12839</accession>
<gene>
    <name type="ORF">ORF11</name>
</gene>
<sequence>MSLSSKLLVYAYYGSYNLPHDRYGESYHLYRIVHEHLTNTYVSNASCVRRDIATARCLNSGHLCFDVARQLLDVSEVAARLSAWFRCGDATGLCADMQRALADIDRHAPLARRVGRRANIFALDAIADIPSDVTNNLQGIIGRFMHFPRCSGLARVADVFDPDIRADGWWYHKFCVLTYMHLVACGAVPAGSATRLRDAVAKHIGPNDEGNCAPAIAAVYGRFCAIGREHFAHHKTACMHILFQFMRNDLTPADERHPCFGVIKDFGRQCKDTYTDLRTHADALYIHGTTDRQKNALFDLLCCVNASDIDADCYDCVVNKFYATQNKKYKM</sequence>
<feature type="chain" id="PRO_0000132948" description="Uncharacterized 37.2 kDa protein">
    <location>
        <begin position="1"/>
        <end position="331"/>
    </location>
</feature>
<keyword id="KW-1185">Reference proteome</keyword>
<reference key="1">
    <citation type="journal article" date="1993" name="Virology">
        <title>Identification and characterization of a putative origin of DNA replication in the genome of a baculovirus pathogenic for Orgyia pseudotsugata.</title>
        <authorList>
            <person name="Pearson M.N."/>
            <person name="Bjornson R.M."/>
            <person name="Ahrens C.H."/>
            <person name="Rohrmann G.F."/>
        </authorList>
    </citation>
    <scope>NUCLEOTIDE SEQUENCE [GENOMIC DNA]</scope>
</reference>
<reference key="2">
    <citation type="journal article" date="1997" name="Virology">
        <title>The sequence of the Orgyia pseudotsugata multinucleocapsid nuclear polyhedrosis virus genome.</title>
        <authorList>
            <person name="Ahrens C.H."/>
            <person name="Russell R.R."/>
            <person name="Funk C.J."/>
            <person name="Evans J."/>
            <person name="Harwood S."/>
            <person name="Rohrmann G.F."/>
        </authorList>
    </citation>
    <scope>NUCLEOTIDE SEQUENCE [LARGE SCALE GENOMIC DNA]</scope>
</reference>
<organismHost>
    <name type="scientific">Orgyia pseudotsugata</name>
    <name type="common">Douglas-fir tussock moth</name>
    <dbReference type="NCBI Taxonomy" id="33414"/>
</organismHost>
<name>Y011_NPVOP</name>
<organism>
    <name type="scientific">Orgyia pseudotsugata multicapsid polyhedrosis virus</name>
    <name type="common">OpMNPV</name>
    <dbReference type="NCBI Taxonomy" id="262177"/>
    <lineage>
        <taxon>Viruses</taxon>
        <taxon>Viruses incertae sedis</taxon>
        <taxon>Naldaviricetes</taxon>
        <taxon>Lefavirales</taxon>
        <taxon>Baculoviridae</taxon>
        <taxon>Alphabaculovirus</taxon>
        <taxon>Alphabaculovirus orpseudotsugatae</taxon>
    </lineage>
</organism>
<dbReference type="EMBL" id="D17353">
    <property type="protein sequence ID" value="BAA04168.1"/>
    <property type="molecule type" value="Genomic_DNA"/>
</dbReference>
<dbReference type="EMBL" id="U75930">
    <property type="protein sequence ID" value="AAC59010.1"/>
    <property type="molecule type" value="Genomic_DNA"/>
</dbReference>
<dbReference type="RefSeq" id="NP_046167.1">
    <property type="nucleotide sequence ID" value="NC_001875.2"/>
</dbReference>
<dbReference type="KEGG" id="vg:911985"/>
<dbReference type="OrthoDB" id="5383at10239"/>
<dbReference type="Proteomes" id="UP000009248">
    <property type="component" value="Genome"/>
</dbReference>
<dbReference type="InterPro" id="IPR009815">
    <property type="entry name" value="AcMNPV_AC11"/>
</dbReference>
<dbReference type="Pfam" id="PF07138">
    <property type="entry name" value="AcMNPV_AC11"/>
    <property type="match status" value="1"/>
</dbReference>
<protein>
    <recommendedName>
        <fullName>Uncharacterized 37.2 kDa protein</fullName>
    </recommendedName>
    <alternativeName>
        <fullName>ORF11</fullName>
    </alternativeName>
</protein>